<feature type="chain" id="PRO_0000428950" description="Gamma-glutamyl-L-1-hydroxyisopropylamide hydrolase">
    <location>
        <begin position="1"/>
        <end position="295"/>
    </location>
</feature>
<feature type="domain" description="Glutamine amidotransferase type-1" evidence="1">
    <location>
        <begin position="5"/>
        <end position="221"/>
    </location>
</feature>
<feature type="active site" description="Nucleophile" evidence="1">
    <location>
        <position position="104"/>
    </location>
</feature>
<feature type="active site" evidence="1">
    <location>
        <position position="200"/>
    </location>
</feature>
<feature type="active site" evidence="1">
    <location>
        <position position="202"/>
    </location>
</feature>
<sequence length="295" mass="32442">MEKLRILICDGNTEADRASFKKFVGCAPSKQFESLLKNYNSQIRTEIAFPADPGPLMTLPLGAYDGILITGSNSHIYEAQPGNLRQIEFAQKAFASGTPMFGVCWGMQLAVVAAGGEVLPSRVADCSCETPFATGVELTSYGSGHPMHHSRTSGFDVFSFHSDEVTRLPGGAVVTARNRNFIQAVEIKHGRSTFWGVQYHPELSGWDQAGFLRESARSLVEDGSYETLNHVEHAAQAISMFKAGAQISEENLVHFEGVDTNSFEFRPLEILNWLDHLVIPTAKRKFGWGGGWLQK</sequence>
<proteinExistence type="evidence at protein level"/>
<evidence type="ECO:0000255" key="1">
    <source>
        <dbReference type="PROSITE-ProRule" id="PRU00605"/>
    </source>
</evidence>
<evidence type="ECO:0000269" key="2">
    <source>
    </source>
</evidence>
<reference key="1">
    <citation type="journal article" date="2002" name="Appl. Environ. Microbiol.">
        <title>Transformation of isopropylamine to L-alaninol by Pseudomonas sp. strain KIE171 involves N-glutamylated intermediates.</title>
        <authorList>
            <person name="de Azevedo Waesch S.I."/>
            <person name="van der Ploeg J.R."/>
            <person name="Maire T."/>
            <person name="Lebreton A."/>
            <person name="Kiener A."/>
            <person name="Leisinger T."/>
        </authorList>
    </citation>
    <scope>NUCLEOTIDE SEQUENCE [GENOMIC DNA]</scope>
    <scope>FUNCTION</scope>
    <scope>CATALYTIC ACTIVITY</scope>
    <scope>DISRUPTION PHENOTYPE</scope>
    <scope>BIOPHYSICOCHEMICAL PROPERTIES</scope>
    <scope>SUBSTRATE SPECIFICITY</scope>
    <source>
        <strain>KIE171</strain>
    </source>
</reference>
<gene>
    <name type="primary">ipuF</name>
</gene>
<organism>
    <name type="scientific">Pseudomonas sp</name>
    <dbReference type="NCBI Taxonomy" id="306"/>
    <lineage>
        <taxon>Bacteria</taxon>
        <taxon>Pseudomonadati</taxon>
        <taxon>Pseudomonadota</taxon>
        <taxon>Gammaproteobacteria</taxon>
        <taxon>Pseudomonadales</taxon>
        <taxon>Pseudomonadaceae</taxon>
        <taxon>Pseudomonas</taxon>
    </lineage>
</organism>
<protein>
    <recommendedName>
        <fullName>Gamma-glutamyl-L-1-hydroxyisopropylamide hydrolase</fullName>
        <ecNumber>3.4.-.-</ecNumber>
    </recommendedName>
    <alternativeName>
        <fullName>Gamma-glutamyl-L-alaninol hydrolase</fullName>
        <shortName>Galo hydrolase</shortName>
    </alternativeName>
</protein>
<accession>Q936S7</accession>
<dbReference type="EC" id="3.4.-.-"/>
<dbReference type="EMBL" id="AJ311159">
    <property type="protein sequence ID" value="CAC81338.1"/>
    <property type="molecule type" value="Genomic_DNA"/>
</dbReference>
<dbReference type="SMR" id="Q936S7"/>
<dbReference type="BioCyc" id="MetaCyc:MONOMER-13566"/>
<dbReference type="SABIO-RK" id="Q936S7"/>
<dbReference type="GO" id="GO:0005829">
    <property type="term" value="C:cytosol"/>
    <property type="evidence" value="ECO:0007669"/>
    <property type="project" value="TreeGrafter"/>
</dbReference>
<dbReference type="GO" id="GO:0016787">
    <property type="term" value="F:hydrolase activity"/>
    <property type="evidence" value="ECO:0007669"/>
    <property type="project" value="UniProtKB-KW"/>
</dbReference>
<dbReference type="CDD" id="cd01741">
    <property type="entry name" value="GATase1_1"/>
    <property type="match status" value="1"/>
</dbReference>
<dbReference type="Gene3D" id="3.40.50.880">
    <property type="match status" value="1"/>
</dbReference>
<dbReference type="InterPro" id="IPR044992">
    <property type="entry name" value="ChyE-like"/>
</dbReference>
<dbReference type="InterPro" id="IPR029062">
    <property type="entry name" value="Class_I_gatase-like"/>
</dbReference>
<dbReference type="InterPro" id="IPR017926">
    <property type="entry name" value="GATASE"/>
</dbReference>
<dbReference type="PANTHER" id="PTHR42695">
    <property type="entry name" value="GLUTAMINE AMIDOTRANSFERASE YLR126C-RELATED"/>
    <property type="match status" value="1"/>
</dbReference>
<dbReference type="PANTHER" id="PTHR42695:SF5">
    <property type="entry name" value="GLUTAMINE AMIDOTRANSFERASE YLR126C-RELATED"/>
    <property type="match status" value="1"/>
</dbReference>
<dbReference type="Pfam" id="PF00117">
    <property type="entry name" value="GATase"/>
    <property type="match status" value="1"/>
</dbReference>
<dbReference type="SUPFAM" id="SSF52317">
    <property type="entry name" value="Class I glutamine amidotransferase-like"/>
    <property type="match status" value="1"/>
</dbReference>
<dbReference type="PROSITE" id="PS51273">
    <property type="entry name" value="GATASE_TYPE_1"/>
    <property type="match status" value="1"/>
</dbReference>
<comment type="function">
    <text evidence="2">Involved in the degradation of isopropylamine, which is a constituent of the herbicides atrazine. Catalyzes the hydrolysis of gamma-glutamyl-L-alaninol (GALO) to L-alaninol and L-glutamate. It can also uses gamma-glutamyl-isopropylamide, gamma-glutamyl-ethylamide, L-glutamine, and gamma-glutamyl-p-nitroanilide.</text>
</comment>
<comment type="catalytic activity">
    <reaction evidence="2">
        <text>gamma-L-glutamyl-L-alaninol + H2O = L-alaninol + L-glutamate</text>
        <dbReference type="Rhea" id="RHEA:45768"/>
        <dbReference type="ChEBI" id="CHEBI:15377"/>
        <dbReference type="ChEBI" id="CHEBI:29985"/>
        <dbReference type="ChEBI" id="CHEBI:85421"/>
        <dbReference type="ChEBI" id="CHEBI:85422"/>
    </reaction>
</comment>
<comment type="biophysicochemical properties">
    <kinetics>
        <KM evidence="2">65 mM for gamma-glutamyl-isopropylamide</KM>
        <Vmax evidence="2">1.5 umol/min/mg enzyme with gamma-glutamyl-isopropylamide as substrate</Vmax>
    </kinetics>
</comment>
<comment type="disruption phenotype">
    <text evidence="2">Cells lacking this gene are unable to transform isopropylamine to L-alaninol.</text>
</comment>
<name>IPUF_PSESP</name>
<keyword id="KW-0378">Hydrolase</keyword>